<evidence type="ECO:0000255" key="1">
    <source>
        <dbReference type="HAMAP-Rule" id="MF_00053"/>
    </source>
</evidence>
<evidence type="ECO:0000255" key="2">
    <source>
        <dbReference type="PROSITE-ProRule" id="PRU01319"/>
    </source>
</evidence>
<comment type="function">
    <text evidence="1">Endonuclease that specifically degrades the RNA of RNA-DNA hybrids.</text>
</comment>
<comment type="catalytic activity">
    <reaction evidence="1">
        <text>Endonucleolytic cleavage to 5'-phosphomonoester.</text>
        <dbReference type="EC" id="3.1.26.4"/>
    </reaction>
</comment>
<comment type="cofactor">
    <cofactor evidence="1">
        <name>Mn(2+)</name>
        <dbReference type="ChEBI" id="CHEBI:29035"/>
    </cofactor>
    <cofactor evidence="1">
        <name>Mg(2+)</name>
        <dbReference type="ChEBI" id="CHEBI:18420"/>
    </cofactor>
    <text evidence="1">Manganese or magnesium. Binds 1 divalent metal ion per monomer in the absence of substrate. May bind a second metal ion after substrate binding.</text>
</comment>
<comment type="subcellular location">
    <subcellularLocation>
        <location evidence="1">Cytoplasm</location>
    </subcellularLocation>
</comment>
<comment type="similarity">
    <text evidence="1">Belongs to the RNase HII family. RnhC subfamily.</text>
</comment>
<proteinExistence type="inferred from homology"/>
<protein>
    <recommendedName>
        <fullName evidence="1">Ribonuclease HIII</fullName>
        <shortName evidence="1">RNase HIII</shortName>
        <ecNumber evidence="1">3.1.26.4</ecNumber>
    </recommendedName>
</protein>
<sequence>MSNSIVIQTSSTVIEDMKQQYKQALSPKIPQGGIFMAKVPSCTITAYKSGKVMFQGGRAEAEASRWQTVSQTPKSTVKKSVNSHQYAPPSSIGTMSILGSDEVGTGDYFGPMTVVAVYVDAKQIPLLKELGVKDSKNLNDAQIAEIAKQLLHVVPYSSLVLHNEKYNELFDKGNNQGKLKALLHNKAITNLLAKIAPTKPEGILIDQFTQPDTYYKYLAKQKQVQRENVYFATKGESVHLAVAAASILARYSFVKQFDELSKKAGMQLPKGAGKQVDIAAAKLIQKVGKERLPEFVKVHFANTEKAFRLLKK</sequence>
<gene>
    <name evidence="1" type="primary">rnhC</name>
    <name type="ordered locus">BcerKBAB4_4384</name>
</gene>
<feature type="chain" id="PRO_1000091673" description="Ribonuclease HIII">
    <location>
        <begin position="1"/>
        <end position="312"/>
    </location>
</feature>
<feature type="domain" description="RNase H type-2" evidence="2">
    <location>
        <begin position="95"/>
        <end position="312"/>
    </location>
</feature>
<feature type="binding site" evidence="1">
    <location>
        <position position="101"/>
    </location>
    <ligand>
        <name>a divalent metal cation</name>
        <dbReference type="ChEBI" id="CHEBI:60240"/>
    </ligand>
</feature>
<feature type="binding site" evidence="1">
    <location>
        <position position="102"/>
    </location>
    <ligand>
        <name>a divalent metal cation</name>
        <dbReference type="ChEBI" id="CHEBI:60240"/>
    </ligand>
</feature>
<feature type="binding site" evidence="1">
    <location>
        <position position="206"/>
    </location>
    <ligand>
        <name>a divalent metal cation</name>
        <dbReference type="ChEBI" id="CHEBI:60240"/>
    </ligand>
</feature>
<reference key="1">
    <citation type="journal article" date="2008" name="Chem. Biol. Interact.">
        <title>Extending the Bacillus cereus group genomics to putative food-borne pathogens of different toxicity.</title>
        <authorList>
            <person name="Lapidus A."/>
            <person name="Goltsman E."/>
            <person name="Auger S."/>
            <person name="Galleron N."/>
            <person name="Segurens B."/>
            <person name="Dossat C."/>
            <person name="Land M.L."/>
            <person name="Broussolle V."/>
            <person name="Brillard J."/>
            <person name="Guinebretiere M.-H."/>
            <person name="Sanchis V."/>
            <person name="Nguen-the C."/>
            <person name="Lereclus D."/>
            <person name="Richardson P."/>
            <person name="Wincker P."/>
            <person name="Weissenbach J."/>
            <person name="Ehrlich S.D."/>
            <person name="Sorokin A."/>
        </authorList>
    </citation>
    <scope>NUCLEOTIDE SEQUENCE [LARGE SCALE GENOMIC DNA]</scope>
    <source>
        <strain>KBAB4</strain>
    </source>
</reference>
<accession>A9VJL6</accession>
<keyword id="KW-0963">Cytoplasm</keyword>
<keyword id="KW-0255">Endonuclease</keyword>
<keyword id="KW-0378">Hydrolase</keyword>
<keyword id="KW-0460">Magnesium</keyword>
<keyword id="KW-0479">Metal-binding</keyword>
<keyword id="KW-0540">Nuclease</keyword>
<name>RNH3_BACMK</name>
<dbReference type="EC" id="3.1.26.4" evidence="1"/>
<dbReference type="EMBL" id="CP000903">
    <property type="protein sequence ID" value="ABY45543.1"/>
    <property type="molecule type" value="Genomic_DNA"/>
</dbReference>
<dbReference type="RefSeq" id="WP_012261790.1">
    <property type="nucleotide sequence ID" value="NC_010184.1"/>
</dbReference>
<dbReference type="SMR" id="A9VJL6"/>
<dbReference type="KEGG" id="bwe:BcerKBAB4_4384"/>
<dbReference type="eggNOG" id="COG1039">
    <property type="taxonomic scope" value="Bacteria"/>
</dbReference>
<dbReference type="HOGENOM" id="CLU_059546_1_0_9"/>
<dbReference type="Proteomes" id="UP000002154">
    <property type="component" value="Chromosome"/>
</dbReference>
<dbReference type="GO" id="GO:0005737">
    <property type="term" value="C:cytoplasm"/>
    <property type="evidence" value="ECO:0007669"/>
    <property type="project" value="UniProtKB-SubCell"/>
</dbReference>
<dbReference type="GO" id="GO:0032299">
    <property type="term" value="C:ribonuclease H2 complex"/>
    <property type="evidence" value="ECO:0007669"/>
    <property type="project" value="TreeGrafter"/>
</dbReference>
<dbReference type="GO" id="GO:0000287">
    <property type="term" value="F:magnesium ion binding"/>
    <property type="evidence" value="ECO:0007669"/>
    <property type="project" value="UniProtKB-UniRule"/>
</dbReference>
<dbReference type="GO" id="GO:0003723">
    <property type="term" value="F:RNA binding"/>
    <property type="evidence" value="ECO:0007669"/>
    <property type="project" value="InterPro"/>
</dbReference>
<dbReference type="GO" id="GO:0004523">
    <property type="term" value="F:RNA-DNA hybrid ribonuclease activity"/>
    <property type="evidence" value="ECO:0007669"/>
    <property type="project" value="UniProtKB-UniRule"/>
</dbReference>
<dbReference type="GO" id="GO:0043137">
    <property type="term" value="P:DNA replication, removal of RNA primer"/>
    <property type="evidence" value="ECO:0007669"/>
    <property type="project" value="TreeGrafter"/>
</dbReference>
<dbReference type="GO" id="GO:0006298">
    <property type="term" value="P:mismatch repair"/>
    <property type="evidence" value="ECO:0007669"/>
    <property type="project" value="TreeGrafter"/>
</dbReference>
<dbReference type="CDD" id="cd06590">
    <property type="entry name" value="RNase_HII_bacteria_HIII_like"/>
    <property type="match status" value="1"/>
</dbReference>
<dbReference type="CDD" id="cd14796">
    <property type="entry name" value="RNAse_HIII_N"/>
    <property type="match status" value="1"/>
</dbReference>
<dbReference type="FunFam" id="3.30.310.10:FF:000016">
    <property type="entry name" value="Ribonuclease HIII"/>
    <property type="match status" value="1"/>
</dbReference>
<dbReference type="FunFam" id="3.30.420.10:FF:000047">
    <property type="entry name" value="Ribonuclease HIII"/>
    <property type="match status" value="1"/>
</dbReference>
<dbReference type="Gene3D" id="3.30.420.10">
    <property type="entry name" value="Ribonuclease H-like superfamily/Ribonuclease H"/>
    <property type="match status" value="1"/>
</dbReference>
<dbReference type="Gene3D" id="3.30.310.10">
    <property type="entry name" value="TATA-Binding Protein"/>
    <property type="match status" value="1"/>
</dbReference>
<dbReference type="HAMAP" id="MF_00053">
    <property type="entry name" value="RNase_HIII"/>
    <property type="match status" value="1"/>
</dbReference>
<dbReference type="InterPro" id="IPR001352">
    <property type="entry name" value="RNase_HII/HIII"/>
</dbReference>
<dbReference type="InterPro" id="IPR024567">
    <property type="entry name" value="RNase_HII/HIII_dom"/>
</dbReference>
<dbReference type="InterPro" id="IPR004641">
    <property type="entry name" value="RNase_HIII"/>
</dbReference>
<dbReference type="InterPro" id="IPR024568">
    <property type="entry name" value="RNase_HIII_N"/>
</dbReference>
<dbReference type="InterPro" id="IPR012337">
    <property type="entry name" value="RNaseH-like_sf"/>
</dbReference>
<dbReference type="InterPro" id="IPR036397">
    <property type="entry name" value="RNaseH_sf"/>
</dbReference>
<dbReference type="InterPro" id="IPR012295">
    <property type="entry name" value="TBP_dom_sf"/>
</dbReference>
<dbReference type="NCBIfam" id="TIGR00716">
    <property type="entry name" value="rnhC"/>
    <property type="match status" value="1"/>
</dbReference>
<dbReference type="PANTHER" id="PTHR10954:SF23">
    <property type="entry name" value="RIBONUCLEASE"/>
    <property type="match status" value="1"/>
</dbReference>
<dbReference type="PANTHER" id="PTHR10954">
    <property type="entry name" value="RIBONUCLEASE H2 SUBUNIT A"/>
    <property type="match status" value="1"/>
</dbReference>
<dbReference type="Pfam" id="PF11858">
    <property type="entry name" value="DUF3378"/>
    <property type="match status" value="1"/>
</dbReference>
<dbReference type="Pfam" id="PF01351">
    <property type="entry name" value="RNase_HII"/>
    <property type="match status" value="1"/>
</dbReference>
<dbReference type="PIRSF" id="PIRSF037748">
    <property type="entry name" value="RnhC"/>
    <property type="match status" value="1"/>
</dbReference>
<dbReference type="SUPFAM" id="SSF53098">
    <property type="entry name" value="Ribonuclease H-like"/>
    <property type="match status" value="1"/>
</dbReference>
<dbReference type="PROSITE" id="PS51975">
    <property type="entry name" value="RNASE_H_2"/>
    <property type="match status" value="1"/>
</dbReference>
<organism>
    <name type="scientific">Bacillus mycoides (strain KBAB4)</name>
    <name type="common">Bacillus weihenstephanensis</name>
    <dbReference type="NCBI Taxonomy" id="315730"/>
    <lineage>
        <taxon>Bacteria</taxon>
        <taxon>Bacillati</taxon>
        <taxon>Bacillota</taxon>
        <taxon>Bacilli</taxon>
        <taxon>Bacillales</taxon>
        <taxon>Bacillaceae</taxon>
        <taxon>Bacillus</taxon>
        <taxon>Bacillus cereus group</taxon>
    </lineage>
</organism>